<dbReference type="EC" id="1.4.4.2" evidence="1"/>
<dbReference type="EMBL" id="AE000512">
    <property type="protein sequence ID" value="AAD35305.1"/>
    <property type="molecule type" value="Genomic_DNA"/>
</dbReference>
<dbReference type="PIR" id="G72403">
    <property type="entry name" value="G72403"/>
</dbReference>
<dbReference type="RefSeq" id="NP_228028.1">
    <property type="nucleotide sequence ID" value="NC_000853.1"/>
</dbReference>
<dbReference type="RefSeq" id="WP_004082888.1">
    <property type="nucleotide sequence ID" value="NC_000853.1"/>
</dbReference>
<dbReference type="SMR" id="Q9WY56"/>
<dbReference type="FunCoup" id="Q9WY56">
    <property type="interactions" value="44"/>
</dbReference>
<dbReference type="STRING" id="243274.TM_0213"/>
<dbReference type="PaxDb" id="243274-THEMA_03660"/>
<dbReference type="EnsemblBacteria" id="AAD35305">
    <property type="protein sequence ID" value="AAD35305"/>
    <property type="gene ID" value="TM_0213"/>
</dbReference>
<dbReference type="KEGG" id="tma:TM0213"/>
<dbReference type="KEGG" id="tmi:THEMA_03660"/>
<dbReference type="KEGG" id="tmm:Tmari_0211"/>
<dbReference type="KEGG" id="tmw:THMA_0220"/>
<dbReference type="eggNOG" id="COG0403">
    <property type="taxonomic scope" value="Bacteria"/>
</dbReference>
<dbReference type="InParanoid" id="Q9WY56"/>
<dbReference type="OrthoDB" id="9771867at2"/>
<dbReference type="Proteomes" id="UP000008183">
    <property type="component" value="Chromosome"/>
</dbReference>
<dbReference type="GO" id="GO:0004375">
    <property type="term" value="F:glycine dehydrogenase (decarboxylating) activity"/>
    <property type="evidence" value="ECO:0007669"/>
    <property type="project" value="UniProtKB-EC"/>
</dbReference>
<dbReference type="GO" id="GO:0019464">
    <property type="term" value="P:glycine decarboxylation via glycine cleavage system"/>
    <property type="evidence" value="ECO:0007669"/>
    <property type="project" value="UniProtKB-UniRule"/>
</dbReference>
<dbReference type="GO" id="GO:0009116">
    <property type="term" value="P:nucleoside metabolic process"/>
    <property type="evidence" value="ECO:0007669"/>
    <property type="project" value="InterPro"/>
</dbReference>
<dbReference type="CDD" id="cd00613">
    <property type="entry name" value="GDC-P"/>
    <property type="match status" value="1"/>
</dbReference>
<dbReference type="Gene3D" id="3.90.1150.10">
    <property type="entry name" value="Aspartate Aminotransferase, domain 1"/>
    <property type="match status" value="1"/>
</dbReference>
<dbReference type="Gene3D" id="3.40.640.10">
    <property type="entry name" value="Type I PLP-dependent aspartate aminotransferase-like (Major domain)"/>
    <property type="match status" value="1"/>
</dbReference>
<dbReference type="HAMAP" id="MF_00712">
    <property type="entry name" value="GcvPA"/>
    <property type="match status" value="1"/>
</dbReference>
<dbReference type="InterPro" id="IPR023010">
    <property type="entry name" value="GcvPA"/>
</dbReference>
<dbReference type="InterPro" id="IPR049315">
    <property type="entry name" value="GDC-P_N"/>
</dbReference>
<dbReference type="InterPro" id="IPR020581">
    <property type="entry name" value="GDC_P"/>
</dbReference>
<dbReference type="InterPro" id="IPR015424">
    <property type="entry name" value="PyrdxlP-dep_Trfase"/>
</dbReference>
<dbReference type="InterPro" id="IPR015421">
    <property type="entry name" value="PyrdxlP-dep_Trfase_major"/>
</dbReference>
<dbReference type="InterPro" id="IPR015422">
    <property type="entry name" value="PyrdxlP-dep_Trfase_small"/>
</dbReference>
<dbReference type="NCBIfam" id="NF001696">
    <property type="entry name" value="PRK00451.1"/>
    <property type="match status" value="1"/>
</dbReference>
<dbReference type="PANTHER" id="PTHR42806">
    <property type="entry name" value="GLYCINE CLEAVAGE SYSTEM P-PROTEIN"/>
    <property type="match status" value="1"/>
</dbReference>
<dbReference type="PANTHER" id="PTHR42806:SF1">
    <property type="entry name" value="GLYCINE DEHYDROGENASE (DECARBOXYLATING)"/>
    <property type="match status" value="1"/>
</dbReference>
<dbReference type="Pfam" id="PF02347">
    <property type="entry name" value="GDC-P"/>
    <property type="match status" value="1"/>
</dbReference>
<dbReference type="PIRSF" id="PIRSF006815">
    <property type="entry name" value="GcvPA"/>
    <property type="match status" value="1"/>
</dbReference>
<dbReference type="SUPFAM" id="SSF53383">
    <property type="entry name" value="PLP-dependent transferases"/>
    <property type="match status" value="1"/>
</dbReference>
<reference key="1">
    <citation type="journal article" date="1999" name="Nature">
        <title>Evidence for lateral gene transfer between Archaea and Bacteria from genome sequence of Thermotoga maritima.</title>
        <authorList>
            <person name="Nelson K.E."/>
            <person name="Clayton R.A."/>
            <person name="Gill S.R."/>
            <person name="Gwinn M.L."/>
            <person name="Dodson R.J."/>
            <person name="Haft D.H."/>
            <person name="Hickey E.K."/>
            <person name="Peterson J.D."/>
            <person name="Nelson W.C."/>
            <person name="Ketchum K.A."/>
            <person name="McDonald L.A."/>
            <person name="Utterback T.R."/>
            <person name="Malek J.A."/>
            <person name="Linher K.D."/>
            <person name="Garrett M.M."/>
            <person name="Stewart A.M."/>
            <person name="Cotton M.D."/>
            <person name="Pratt M.S."/>
            <person name="Phillips C.A."/>
            <person name="Richardson D.L."/>
            <person name="Heidelberg J.F."/>
            <person name="Sutton G.G."/>
            <person name="Fleischmann R.D."/>
            <person name="Eisen J.A."/>
            <person name="White O."/>
            <person name="Salzberg S.L."/>
            <person name="Smith H.O."/>
            <person name="Venter J.C."/>
            <person name="Fraser C.M."/>
        </authorList>
    </citation>
    <scope>NUCLEOTIDE SEQUENCE [LARGE SCALE GENOMIC DNA]</scope>
    <source>
        <strain>ATCC 43589 / DSM 3109 / JCM 10099 / NBRC 100826 / MSB8</strain>
    </source>
</reference>
<accession>Q9WY56</accession>
<organism>
    <name type="scientific">Thermotoga maritima (strain ATCC 43589 / DSM 3109 / JCM 10099 / NBRC 100826 / MSB8)</name>
    <dbReference type="NCBI Taxonomy" id="243274"/>
    <lineage>
        <taxon>Bacteria</taxon>
        <taxon>Thermotogati</taxon>
        <taxon>Thermotogota</taxon>
        <taxon>Thermotogae</taxon>
        <taxon>Thermotogales</taxon>
        <taxon>Thermotogaceae</taxon>
        <taxon>Thermotoga</taxon>
    </lineage>
</organism>
<gene>
    <name evidence="1" type="primary">gcvPA</name>
    <name type="ordered locus">TM_0213</name>
</gene>
<feature type="chain" id="PRO_0000166980" description="Probable glycine dehydrogenase (decarboxylating) subunit 1">
    <location>
        <begin position="1"/>
        <end position="437"/>
    </location>
</feature>
<evidence type="ECO:0000255" key="1">
    <source>
        <dbReference type="HAMAP-Rule" id="MF_00712"/>
    </source>
</evidence>
<name>GCSPA_THEMA</name>
<protein>
    <recommendedName>
        <fullName evidence="1">Probable glycine dehydrogenase (decarboxylating) subunit 1</fullName>
        <ecNumber evidence="1">1.4.4.2</ecNumber>
    </recommendedName>
    <alternativeName>
        <fullName evidence="1">Glycine cleavage system P-protein subunit 1</fullName>
    </alternativeName>
    <alternativeName>
        <fullName evidence="1">Glycine decarboxylase subunit 1</fullName>
    </alternativeName>
    <alternativeName>
        <fullName evidence="1">Glycine dehydrogenase (aminomethyl-transferring) subunit 1</fullName>
    </alternativeName>
</protein>
<sequence>MNYPYIPHTDEDVRAMLDFIGVSSIEELFSSIPVSARSSLNIPESRDEFSVFKQLKEISEMNNSLEDYAVFLGAGVYKRYVPTVVYDLAMKPDFLTAYTPYQAEVSQGTLQALFEYQTMVCELTGMEVANASMYDGATALAEAALMSFRLTGKEKVVVARSVHPEYRAVLRTYLEKRGFTVVEAGYDETGRVLLEEVDEETAAIAVQYPNFFGIIEDLDYVRSRSGNALLIVVVEPVSLALLEPPGSYGADIVVGEGQSLGLPMWFGGYSLGIFATREEYVRQMPGRLIGQTVDQAGNTAYTMILQTREQHIRRARATSNICSNHAHAALIAAVYMSVMGPDGLKEVARRSYNAAHYLQERLEEIGFKLCFSGEFFNEFVFNVPEDYPDRWRKMMEKKILGPLPLEEFYPELGDTALACATEVISKEDIEKLLEAMK</sequence>
<proteinExistence type="inferred from homology"/>
<keyword id="KW-0560">Oxidoreductase</keyword>
<keyword id="KW-1185">Reference proteome</keyword>
<comment type="function">
    <text evidence="1">The glycine cleavage system catalyzes the degradation of glycine. The P protein binds the alpha-amino group of glycine through its pyridoxal phosphate cofactor; CO(2) is released and the remaining methylamine moiety is then transferred to the lipoamide cofactor of the H protein.</text>
</comment>
<comment type="catalytic activity">
    <reaction evidence="1">
        <text>N(6)-[(R)-lipoyl]-L-lysyl-[glycine-cleavage complex H protein] + glycine + H(+) = N(6)-[(R)-S(8)-aminomethyldihydrolipoyl]-L-lysyl-[glycine-cleavage complex H protein] + CO2</text>
        <dbReference type="Rhea" id="RHEA:24304"/>
        <dbReference type="Rhea" id="RHEA-COMP:10494"/>
        <dbReference type="Rhea" id="RHEA-COMP:10495"/>
        <dbReference type="ChEBI" id="CHEBI:15378"/>
        <dbReference type="ChEBI" id="CHEBI:16526"/>
        <dbReference type="ChEBI" id="CHEBI:57305"/>
        <dbReference type="ChEBI" id="CHEBI:83099"/>
        <dbReference type="ChEBI" id="CHEBI:83143"/>
        <dbReference type="EC" id="1.4.4.2"/>
    </reaction>
</comment>
<comment type="subunit">
    <text evidence="1">The glycine cleavage system is composed of four proteins: P, T, L and H. In this organism, the P 'protein' is a heterodimer of two subunits.</text>
</comment>
<comment type="similarity">
    <text evidence="1">Belongs to the GcvP family. N-terminal subunit subfamily.</text>
</comment>